<feature type="chain" id="PRO_1000071171" description="N-acetylmuramic acid 6-phosphate etherase">
    <location>
        <begin position="1"/>
        <end position="304"/>
    </location>
</feature>
<feature type="domain" description="SIS" evidence="1">
    <location>
        <begin position="62"/>
        <end position="225"/>
    </location>
</feature>
<feature type="active site" description="Proton donor" evidence="1">
    <location>
        <position position="90"/>
    </location>
</feature>
<feature type="active site" evidence="1">
    <location>
        <position position="121"/>
    </location>
</feature>
<name>MURQ_ACTSZ</name>
<evidence type="ECO:0000255" key="1">
    <source>
        <dbReference type="HAMAP-Rule" id="MF_00068"/>
    </source>
</evidence>
<accession>A6VKY9</accession>
<protein>
    <recommendedName>
        <fullName evidence="1">N-acetylmuramic acid 6-phosphate etherase</fullName>
        <shortName evidence="1">MurNAc-6-P etherase</shortName>
        <ecNumber evidence="1">4.2.1.126</ecNumber>
    </recommendedName>
    <alternativeName>
        <fullName evidence="1">N-acetylmuramic acid 6-phosphate hydrolase</fullName>
    </alternativeName>
    <alternativeName>
        <fullName evidence="1">N-acetylmuramic acid 6-phosphate lyase</fullName>
    </alternativeName>
</protein>
<keyword id="KW-0119">Carbohydrate metabolism</keyword>
<keyword id="KW-0456">Lyase</keyword>
<keyword id="KW-1185">Reference proteome</keyword>
<reference key="1">
    <citation type="journal article" date="2010" name="BMC Genomics">
        <title>A genomic perspective on the potential of Actinobacillus succinogenes for industrial succinate production.</title>
        <authorList>
            <person name="McKinlay J.B."/>
            <person name="Laivenieks M."/>
            <person name="Schindler B.D."/>
            <person name="McKinlay A.A."/>
            <person name="Siddaramappa S."/>
            <person name="Challacombe J.F."/>
            <person name="Lowry S.R."/>
            <person name="Clum A."/>
            <person name="Lapidus A.L."/>
            <person name="Burkhart K.B."/>
            <person name="Harkins V."/>
            <person name="Vieille C."/>
        </authorList>
    </citation>
    <scope>NUCLEOTIDE SEQUENCE [LARGE SCALE GENOMIC DNA]</scope>
    <source>
        <strain>ATCC 55618 / DSM 22257 / CCUG 43843 / 130Z</strain>
    </source>
</reference>
<gene>
    <name evidence="1" type="primary">murQ</name>
    <name type="ordered locus">Asuc_0257</name>
</gene>
<comment type="function">
    <text evidence="1">Specifically catalyzes the cleavage of the D-lactyl ether substituent of MurNAc 6-phosphate, producing GlcNAc 6-phosphate and D-lactate. Together with AnmK, is also required for the utilization of anhydro-N-acetylmuramic acid (anhMurNAc) either imported from the medium or derived from its own cell wall murein, and thus plays a role in cell wall recycling.</text>
</comment>
<comment type="catalytic activity">
    <reaction evidence="1">
        <text>N-acetyl-D-muramate 6-phosphate + H2O = N-acetyl-D-glucosamine 6-phosphate + (R)-lactate</text>
        <dbReference type="Rhea" id="RHEA:26410"/>
        <dbReference type="ChEBI" id="CHEBI:15377"/>
        <dbReference type="ChEBI" id="CHEBI:16004"/>
        <dbReference type="ChEBI" id="CHEBI:57513"/>
        <dbReference type="ChEBI" id="CHEBI:58722"/>
        <dbReference type="EC" id="4.2.1.126"/>
    </reaction>
</comment>
<comment type="pathway">
    <text evidence="1">Amino-sugar metabolism; 1,6-anhydro-N-acetylmuramate degradation.</text>
</comment>
<comment type="pathway">
    <text evidence="1">Amino-sugar metabolism; N-acetylmuramate degradation.</text>
</comment>
<comment type="pathway">
    <text evidence="1">Cell wall biogenesis; peptidoglycan recycling.</text>
</comment>
<comment type="subunit">
    <text evidence="1">Homodimer.</text>
</comment>
<comment type="miscellaneous">
    <text evidence="1">A lyase-type mechanism (elimination/hydration) is suggested for the cleavage of the lactyl ether bond of MurNAc 6-phosphate, with the formation of an alpha,beta-unsaturated aldehyde intermediate with (E)-stereochemistry, followed by the syn addition of water to give product.</text>
</comment>
<comment type="similarity">
    <text evidence="1">Belongs to the GCKR-like family. MurNAc-6-P etherase subfamily.</text>
</comment>
<proteinExistence type="inferred from homology"/>
<sequence>MTEQNLLQSLAQMVTEQRNANSIDIDRLNAAEIVKIINQEDKSVPFAVEQCLPQIALAVEKIVTAFRQGGRLVYIGAGTSGRLGVLDASECPPTYGVPSDMVVGIIAGGERALRHPIEGAEDNPQQGQADLENIHFTAKDVLVGIAASGRTPYVIGALNYAKSLDAVTVAITGNPGSAMTQIADIAIEAVVGQEVLTGSSRMKSGTAQKLVLNMLTTASMILMGKCYQNLMVDVQASNEKLRARAVRIVMQATECSKDVAQETLQRADNNAKLAIMMVLSGLEKTDAAQVLDRHQGKLRQALAQ</sequence>
<dbReference type="EC" id="4.2.1.126" evidence="1"/>
<dbReference type="EMBL" id="CP000746">
    <property type="protein sequence ID" value="ABR73636.1"/>
    <property type="molecule type" value="Genomic_DNA"/>
</dbReference>
<dbReference type="RefSeq" id="WP_011978912.1">
    <property type="nucleotide sequence ID" value="NC_009655.1"/>
</dbReference>
<dbReference type="SMR" id="A6VKY9"/>
<dbReference type="STRING" id="339671.Asuc_0257"/>
<dbReference type="KEGG" id="asu:Asuc_0257"/>
<dbReference type="eggNOG" id="COG2103">
    <property type="taxonomic scope" value="Bacteria"/>
</dbReference>
<dbReference type="HOGENOM" id="CLU_049049_1_1_6"/>
<dbReference type="OrthoDB" id="9813395at2"/>
<dbReference type="UniPathway" id="UPA00342"/>
<dbReference type="UniPathway" id="UPA00343"/>
<dbReference type="UniPathway" id="UPA00544"/>
<dbReference type="Proteomes" id="UP000001114">
    <property type="component" value="Chromosome"/>
</dbReference>
<dbReference type="GO" id="GO:0097367">
    <property type="term" value="F:carbohydrate derivative binding"/>
    <property type="evidence" value="ECO:0007669"/>
    <property type="project" value="InterPro"/>
</dbReference>
<dbReference type="GO" id="GO:0016835">
    <property type="term" value="F:carbon-oxygen lyase activity"/>
    <property type="evidence" value="ECO:0007669"/>
    <property type="project" value="UniProtKB-UniRule"/>
</dbReference>
<dbReference type="GO" id="GO:0016803">
    <property type="term" value="F:ether hydrolase activity"/>
    <property type="evidence" value="ECO:0007669"/>
    <property type="project" value="TreeGrafter"/>
</dbReference>
<dbReference type="GO" id="GO:0097175">
    <property type="term" value="P:1,6-anhydro-N-acetyl-beta-muramic acid catabolic process"/>
    <property type="evidence" value="ECO:0007669"/>
    <property type="project" value="UniProtKB-UniRule"/>
</dbReference>
<dbReference type="GO" id="GO:0046348">
    <property type="term" value="P:amino sugar catabolic process"/>
    <property type="evidence" value="ECO:0007669"/>
    <property type="project" value="InterPro"/>
</dbReference>
<dbReference type="GO" id="GO:0097173">
    <property type="term" value="P:N-acetylmuramic acid catabolic process"/>
    <property type="evidence" value="ECO:0007669"/>
    <property type="project" value="UniProtKB-UniPathway"/>
</dbReference>
<dbReference type="GO" id="GO:0009254">
    <property type="term" value="P:peptidoglycan turnover"/>
    <property type="evidence" value="ECO:0007669"/>
    <property type="project" value="UniProtKB-UniRule"/>
</dbReference>
<dbReference type="CDD" id="cd05007">
    <property type="entry name" value="SIS_Etherase"/>
    <property type="match status" value="1"/>
</dbReference>
<dbReference type="FunFam" id="1.10.8.1080:FF:000001">
    <property type="entry name" value="N-acetylmuramic acid 6-phosphate etherase"/>
    <property type="match status" value="1"/>
</dbReference>
<dbReference type="FunFam" id="3.40.50.10490:FF:000014">
    <property type="entry name" value="N-acetylmuramic acid 6-phosphate etherase"/>
    <property type="match status" value="1"/>
</dbReference>
<dbReference type="Gene3D" id="1.10.8.1080">
    <property type="match status" value="1"/>
</dbReference>
<dbReference type="Gene3D" id="3.40.50.10490">
    <property type="entry name" value="Glucose-6-phosphate isomerase like protein, domain 1"/>
    <property type="match status" value="1"/>
</dbReference>
<dbReference type="HAMAP" id="MF_00068">
    <property type="entry name" value="MurQ"/>
    <property type="match status" value="1"/>
</dbReference>
<dbReference type="InterPro" id="IPR005488">
    <property type="entry name" value="Etherase_MurQ"/>
</dbReference>
<dbReference type="InterPro" id="IPR040190">
    <property type="entry name" value="MURQ/GCKR"/>
</dbReference>
<dbReference type="InterPro" id="IPR001347">
    <property type="entry name" value="SIS_dom"/>
</dbReference>
<dbReference type="InterPro" id="IPR046348">
    <property type="entry name" value="SIS_dom_sf"/>
</dbReference>
<dbReference type="NCBIfam" id="TIGR00274">
    <property type="entry name" value="N-acetylmuramic acid 6-phosphate etherase"/>
    <property type="match status" value="1"/>
</dbReference>
<dbReference type="NCBIfam" id="NF003915">
    <property type="entry name" value="PRK05441.1"/>
    <property type="match status" value="1"/>
</dbReference>
<dbReference type="NCBIfam" id="NF009222">
    <property type="entry name" value="PRK12570.1"/>
    <property type="match status" value="1"/>
</dbReference>
<dbReference type="PANTHER" id="PTHR10088">
    <property type="entry name" value="GLUCOKINASE REGULATORY PROTEIN"/>
    <property type="match status" value="1"/>
</dbReference>
<dbReference type="PANTHER" id="PTHR10088:SF4">
    <property type="entry name" value="GLUCOKINASE REGULATORY PROTEIN"/>
    <property type="match status" value="1"/>
</dbReference>
<dbReference type="Pfam" id="PF20741">
    <property type="entry name" value="GKRP-like_C"/>
    <property type="match status" value="1"/>
</dbReference>
<dbReference type="Pfam" id="PF22645">
    <property type="entry name" value="GKRP_SIS_N"/>
    <property type="match status" value="1"/>
</dbReference>
<dbReference type="SUPFAM" id="SSF53697">
    <property type="entry name" value="SIS domain"/>
    <property type="match status" value="1"/>
</dbReference>
<dbReference type="PROSITE" id="PS51464">
    <property type="entry name" value="SIS"/>
    <property type="match status" value="1"/>
</dbReference>
<organism>
    <name type="scientific">Actinobacillus succinogenes (strain ATCC 55618 / DSM 22257 / CCUG 43843 / 130Z)</name>
    <dbReference type="NCBI Taxonomy" id="339671"/>
    <lineage>
        <taxon>Bacteria</taxon>
        <taxon>Pseudomonadati</taxon>
        <taxon>Pseudomonadota</taxon>
        <taxon>Gammaproteobacteria</taxon>
        <taxon>Pasteurellales</taxon>
        <taxon>Pasteurellaceae</taxon>
        <taxon>Actinobacillus</taxon>
    </lineage>
</organism>